<evidence type="ECO:0000255" key="1">
    <source>
        <dbReference type="HAMAP-Rule" id="MF_00391"/>
    </source>
</evidence>
<evidence type="ECO:0000256" key="2">
    <source>
        <dbReference type="SAM" id="MobiDB-lite"/>
    </source>
</evidence>
<evidence type="ECO:0000305" key="3"/>
<feature type="chain" id="PRO_1000013446" description="Large ribosomal subunit protein bL34">
    <location>
        <begin position="1"/>
        <end position="45"/>
    </location>
</feature>
<feature type="region of interest" description="Disordered" evidence="2">
    <location>
        <begin position="1"/>
        <end position="21"/>
    </location>
</feature>
<feature type="compositionally biased region" description="Polar residues" evidence="2">
    <location>
        <begin position="1"/>
        <end position="10"/>
    </location>
</feature>
<feature type="compositionally biased region" description="Basic residues" evidence="2">
    <location>
        <begin position="11"/>
        <end position="20"/>
    </location>
</feature>
<gene>
    <name evidence="1" type="primary">rpmH</name>
    <name type="ordered locus">Sputw3181_4095</name>
</gene>
<organism>
    <name type="scientific">Shewanella sp. (strain W3-18-1)</name>
    <dbReference type="NCBI Taxonomy" id="351745"/>
    <lineage>
        <taxon>Bacteria</taxon>
        <taxon>Pseudomonadati</taxon>
        <taxon>Pseudomonadota</taxon>
        <taxon>Gammaproteobacteria</taxon>
        <taxon>Alteromonadales</taxon>
        <taxon>Shewanellaceae</taxon>
        <taxon>Shewanella</taxon>
    </lineage>
</organism>
<protein>
    <recommendedName>
        <fullName evidence="1">Large ribosomal subunit protein bL34</fullName>
    </recommendedName>
    <alternativeName>
        <fullName evidence="3">50S ribosomal protein L34</fullName>
    </alternativeName>
</protein>
<name>RL34_SHESW</name>
<sequence length="45" mass="5153">MSKRTFQPSNLKRKRSHGFRARMATVGGRKVLARRRAKGRARLSA</sequence>
<keyword id="KW-0687">Ribonucleoprotein</keyword>
<keyword id="KW-0689">Ribosomal protein</keyword>
<accession>A1RQF2</accession>
<dbReference type="EMBL" id="CP000503">
    <property type="protein sequence ID" value="ABM26897.1"/>
    <property type="molecule type" value="Genomic_DNA"/>
</dbReference>
<dbReference type="RefSeq" id="WP_006083827.1">
    <property type="nucleotide sequence ID" value="NC_008750.1"/>
</dbReference>
<dbReference type="SMR" id="A1RQF2"/>
<dbReference type="GeneID" id="90572020"/>
<dbReference type="KEGG" id="shw:Sputw3181_4095"/>
<dbReference type="HOGENOM" id="CLU_129938_2_0_6"/>
<dbReference type="Proteomes" id="UP000002597">
    <property type="component" value="Chromosome"/>
</dbReference>
<dbReference type="GO" id="GO:1990904">
    <property type="term" value="C:ribonucleoprotein complex"/>
    <property type="evidence" value="ECO:0007669"/>
    <property type="project" value="UniProtKB-KW"/>
</dbReference>
<dbReference type="GO" id="GO:0005840">
    <property type="term" value="C:ribosome"/>
    <property type="evidence" value="ECO:0007669"/>
    <property type="project" value="UniProtKB-KW"/>
</dbReference>
<dbReference type="GO" id="GO:0003735">
    <property type="term" value="F:structural constituent of ribosome"/>
    <property type="evidence" value="ECO:0007669"/>
    <property type="project" value="InterPro"/>
</dbReference>
<dbReference type="GO" id="GO:0006412">
    <property type="term" value="P:translation"/>
    <property type="evidence" value="ECO:0007669"/>
    <property type="project" value="UniProtKB-UniRule"/>
</dbReference>
<dbReference type="FunFam" id="1.10.287.3980:FF:000001">
    <property type="entry name" value="Mitochondrial ribosomal protein L34"/>
    <property type="match status" value="1"/>
</dbReference>
<dbReference type="Gene3D" id="1.10.287.3980">
    <property type="match status" value="1"/>
</dbReference>
<dbReference type="HAMAP" id="MF_00391">
    <property type="entry name" value="Ribosomal_bL34"/>
    <property type="match status" value="1"/>
</dbReference>
<dbReference type="InterPro" id="IPR000271">
    <property type="entry name" value="Ribosomal_bL34"/>
</dbReference>
<dbReference type="InterPro" id="IPR020939">
    <property type="entry name" value="Ribosomal_bL34_CS"/>
</dbReference>
<dbReference type="NCBIfam" id="TIGR01030">
    <property type="entry name" value="rpmH_bact"/>
    <property type="match status" value="1"/>
</dbReference>
<dbReference type="PANTHER" id="PTHR14503:SF4">
    <property type="entry name" value="LARGE RIBOSOMAL SUBUNIT PROTEIN BL34M"/>
    <property type="match status" value="1"/>
</dbReference>
<dbReference type="PANTHER" id="PTHR14503">
    <property type="entry name" value="MITOCHONDRIAL RIBOSOMAL PROTEIN 34 FAMILY MEMBER"/>
    <property type="match status" value="1"/>
</dbReference>
<dbReference type="Pfam" id="PF00468">
    <property type="entry name" value="Ribosomal_L34"/>
    <property type="match status" value="1"/>
</dbReference>
<dbReference type="PROSITE" id="PS00784">
    <property type="entry name" value="RIBOSOMAL_L34"/>
    <property type="match status" value="1"/>
</dbReference>
<reference key="1">
    <citation type="submission" date="2006-12" db="EMBL/GenBank/DDBJ databases">
        <title>Complete sequence of Shewanella sp. W3-18-1.</title>
        <authorList>
            <consortium name="US DOE Joint Genome Institute"/>
            <person name="Copeland A."/>
            <person name="Lucas S."/>
            <person name="Lapidus A."/>
            <person name="Barry K."/>
            <person name="Detter J.C."/>
            <person name="Glavina del Rio T."/>
            <person name="Hammon N."/>
            <person name="Israni S."/>
            <person name="Dalin E."/>
            <person name="Tice H."/>
            <person name="Pitluck S."/>
            <person name="Chain P."/>
            <person name="Malfatti S."/>
            <person name="Shin M."/>
            <person name="Vergez L."/>
            <person name="Schmutz J."/>
            <person name="Larimer F."/>
            <person name="Land M."/>
            <person name="Hauser L."/>
            <person name="Kyrpides N."/>
            <person name="Lykidis A."/>
            <person name="Tiedje J."/>
            <person name="Richardson P."/>
        </authorList>
    </citation>
    <scope>NUCLEOTIDE SEQUENCE [LARGE SCALE GENOMIC DNA]</scope>
    <source>
        <strain>W3-18-1</strain>
    </source>
</reference>
<comment type="similarity">
    <text evidence="1">Belongs to the bacterial ribosomal protein bL34 family.</text>
</comment>
<proteinExistence type="inferred from homology"/>